<accession>B6YX10</accession>
<keyword id="KW-0028">Amino-acid biosynthesis</keyword>
<keyword id="KW-0057">Aromatic amino acid biosynthesis</keyword>
<keyword id="KW-0456">Lyase</keyword>
<keyword id="KW-0704">Schiff base</keyword>
<dbReference type="EC" id="4.2.1.10" evidence="1"/>
<dbReference type="EMBL" id="CP000855">
    <property type="protein sequence ID" value="ACJ16623.1"/>
    <property type="molecule type" value="Genomic_DNA"/>
</dbReference>
<dbReference type="RefSeq" id="WP_012572095.1">
    <property type="nucleotide sequence ID" value="NC_011529.1"/>
</dbReference>
<dbReference type="SMR" id="B6YX10"/>
<dbReference type="STRING" id="523850.TON_1135"/>
<dbReference type="GeneID" id="7018157"/>
<dbReference type="KEGG" id="ton:TON_1135"/>
<dbReference type="PATRIC" id="fig|523850.10.peg.1143"/>
<dbReference type="eggNOG" id="arCOG02097">
    <property type="taxonomic scope" value="Archaea"/>
</dbReference>
<dbReference type="HOGENOM" id="CLU_064444_2_1_2"/>
<dbReference type="OrthoDB" id="34329at2157"/>
<dbReference type="UniPathway" id="UPA00053">
    <property type="reaction ID" value="UER00086"/>
</dbReference>
<dbReference type="Proteomes" id="UP000002727">
    <property type="component" value="Chromosome"/>
</dbReference>
<dbReference type="GO" id="GO:0003855">
    <property type="term" value="F:3-dehydroquinate dehydratase activity"/>
    <property type="evidence" value="ECO:0007669"/>
    <property type="project" value="UniProtKB-UniRule"/>
</dbReference>
<dbReference type="GO" id="GO:0046279">
    <property type="term" value="P:3,4-dihydroxybenzoate biosynthetic process"/>
    <property type="evidence" value="ECO:0007669"/>
    <property type="project" value="TreeGrafter"/>
</dbReference>
<dbReference type="GO" id="GO:0008652">
    <property type="term" value="P:amino acid biosynthetic process"/>
    <property type="evidence" value="ECO:0007669"/>
    <property type="project" value="UniProtKB-KW"/>
</dbReference>
<dbReference type="GO" id="GO:0009073">
    <property type="term" value="P:aromatic amino acid family biosynthetic process"/>
    <property type="evidence" value="ECO:0007669"/>
    <property type="project" value="UniProtKB-KW"/>
</dbReference>
<dbReference type="GO" id="GO:0009423">
    <property type="term" value="P:chorismate biosynthetic process"/>
    <property type="evidence" value="ECO:0007669"/>
    <property type="project" value="UniProtKB-UniRule"/>
</dbReference>
<dbReference type="CDD" id="cd00502">
    <property type="entry name" value="DHQase_I"/>
    <property type="match status" value="1"/>
</dbReference>
<dbReference type="Gene3D" id="3.20.20.70">
    <property type="entry name" value="Aldolase class I"/>
    <property type="match status" value="1"/>
</dbReference>
<dbReference type="HAMAP" id="MF_00214">
    <property type="entry name" value="AroD"/>
    <property type="match status" value="1"/>
</dbReference>
<dbReference type="InterPro" id="IPR013785">
    <property type="entry name" value="Aldolase_TIM"/>
</dbReference>
<dbReference type="InterPro" id="IPR001381">
    <property type="entry name" value="DHquinase_I"/>
</dbReference>
<dbReference type="InterPro" id="IPR050146">
    <property type="entry name" value="Type-I_3-dehydroquinase"/>
</dbReference>
<dbReference type="NCBIfam" id="TIGR01093">
    <property type="entry name" value="aroD"/>
    <property type="match status" value="1"/>
</dbReference>
<dbReference type="NCBIfam" id="NF002683">
    <property type="entry name" value="PRK02412.2-2"/>
    <property type="match status" value="1"/>
</dbReference>
<dbReference type="PANTHER" id="PTHR43699">
    <property type="entry name" value="3-DEHYDROQUINATE DEHYDRATASE"/>
    <property type="match status" value="1"/>
</dbReference>
<dbReference type="PANTHER" id="PTHR43699:SF1">
    <property type="entry name" value="3-DEHYDROQUINATE DEHYDRATASE"/>
    <property type="match status" value="1"/>
</dbReference>
<dbReference type="Pfam" id="PF01487">
    <property type="entry name" value="DHquinase_I"/>
    <property type="match status" value="1"/>
</dbReference>
<dbReference type="SUPFAM" id="SSF51569">
    <property type="entry name" value="Aldolase"/>
    <property type="match status" value="1"/>
</dbReference>
<evidence type="ECO:0000255" key="1">
    <source>
        <dbReference type="HAMAP-Rule" id="MF_00214"/>
    </source>
</evidence>
<comment type="function">
    <text evidence="1">Involved in the third step of the chorismate pathway, which leads to the biosynthesis of aromatic amino acids. Catalyzes the cis-dehydration of 3-dehydroquinate (DHQ) and introduces the first double bond of the aromatic ring to yield 3-dehydroshikimate.</text>
</comment>
<comment type="catalytic activity">
    <reaction evidence="1">
        <text>3-dehydroquinate = 3-dehydroshikimate + H2O</text>
        <dbReference type="Rhea" id="RHEA:21096"/>
        <dbReference type="ChEBI" id="CHEBI:15377"/>
        <dbReference type="ChEBI" id="CHEBI:16630"/>
        <dbReference type="ChEBI" id="CHEBI:32364"/>
        <dbReference type="EC" id="4.2.1.10"/>
    </reaction>
</comment>
<comment type="pathway">
    <text evidence="1">Metabolic intermediate biosynthesis; chorismate biosynthesis; chorismate from D-erythrose 4-phosphate and phosphoenolpyruvate: step 3/7.</text>
</comment>
<comment type="subunit">
    <text evidence="1">Homodimer.</text>
</comment>
<comment type="similarity">
    <text evidence="1">Belongs to the type-I 3-dehydroquinase family.</text>
</comment>
<name>AROD_THEON</name>
<protein>
    <recommendedName>
        <fullName evidence="1">3-dehydroquinate dehydratase</fullName>
        <shortName evidence="1">3-dehydroquinase</shortName>
        <ecNumber evidence="1">4.2.1.10</ecNumber>
    </recommendedName>
    <alternativeName>
        <fullName evidence="1">Type I DHQase</fullName>
    </alternativeName>
    <alternativeName>
        <fullName evidence="1">Type I dehydroquinase</fullName>
        <shortName evidence="1">DHQ1</shortName>
    </alternativeName>
</protein>
<reference key="1">
    <citation type="journal article" date="2008" name="J. Bacteriol.">
        <title>The complete genome sequence of Thermococcus onnurineus NA1 reveals a mixed heterotrophic and carboxydotrophic metabolism.</title>
        <authorList>
            <person name="Lee H.S."/>
            <person name="Kang S.G."/>
            <person name="Bae S.S."/>
            <person name="Lim J.K."/>
            <person name="Cho Y."/>
            <person name="Kim Y.J."/>
            <person name="Jeon J.H."/>
            <person name="Cha S.-S."/>
            <person name="Kwon K.K."/>
            <person name="Kim H.-T."/>
            <person name="Park C.-J."/>
            <person name="Lee H.-W."/>
            <person name="Kim S.I."/>
            <person name="Chun J."/>
            <person name="Colwell R.R."/>
            <person name="Kim S.-J."/>
            <person name="Lee J.-H."/>
        </authorList>
    </citation>
    <scope>NUCLEOTIDE SEQUENCE [LARGE SCALE GENOMIC DNA]</scope>
    <source>
        <strain>NA1</strain>
    </source>
</reference>
<proteinExistence type="inferred from homology"/>
<sequence length="215" mass="24146">MIVGVVLAKNAQKAVEKIKSGEADLYEVRLDHFSSFDGLEELEPFAPNLIFTFRSYEEGGRREASDEERLRVYKRVLELYPAYVDVGLNSGIAERVVKEAREKRVGVVLSYHNFEETPDFWELLGVVKAMEALEPDVMKIVTMARSLGDNLRIARLYEGRENVVAFCMGSLGRLSRLISALLAPFTYASLDEEAAPGQLTVEELRRAIEVVGDGR</sequence>
<feature type="chain" id="PRO_1000099924" description="3-dehydroquinate dehydratase">
    <location>
        <begin position="1"/>
        <end position="215"/>
    </location>
</feature>
<feature type="active site" description="Proton donor/acceptor" evidence="1">
    <location>
        <position position="112"/>
    </location>
</feature>
<feature type="active site" description="Schiff-base intermediate with substrate" evidence="1">
    <location>
        <position position="139"/>
    </location>
</feature>
<feature type="binding site" evidence="1">
    <location>
        <begin position="27"/>
        <end position="29"/>
    </location>
    <ligand>
        <name>3-dehydroquinate</name>
        <dbReference type="ChEBI" id="CHEBI:32364"/>
    </ligand>
</feature>
<feature type="binding site" evidence="1">
    <location>
        <position position="54"/>
    </location>
    <ligand>
        <name>3-dehydroquinate</name>
        <dbReference type="ChEBI" id="CHEBI:32364"/>
    </ligand>
</feature>
<feature type="binding site" evidence="1">
    <location>
        <position position="176"/>
    </location>
    <ligand>
        <name>3-dehydroquinate</name>
        <dbReference type="ChEBI" id="CHEBI:32364"/>
    </ligand>
</feature>
<feature type="binding site" evidence="1">
    <location>
        <position position="198"/>
    </location>
    <ligand>
        <name>3-dehydroquinate</name>
        <dbReference type="ChEBI" id="CHEBI:32364"/>
    </ligand>
</feature>
<gene>
    <name evidence="1" type="primary">aroD</name>
    <name type="ordered locus">TON_1135</name>
</gene>
<organism>
    <name type="scientific">Thermococcus onnurineus (strain NA1)</name>
    <dbReference type="NCBI Taxonomy" id="523850"/>
    <lineage>
        <taxon>Archaea</taxon>
        <taxon>Methanobacteriati</taxon>
        <taxon>Methanobacteriota</taxon>
        <taxon>Thermococci</taxon>
        <taxon>Thermococcales</taxon>
        <taxon>Thermococcaceae</taxon>
        <taxon>Thermococcus</taxon>
    </lineage>
</organism>